<feature type="chain" id="PRO_0000333118" description="Na(+)/H(+) antiporter NhaB">
    <location>
        <begin position="1"/>
        <end position="514"/>
    </location>
</feature>
<feature type="transmembrane region" description="Helical" evidence="1">
    <location>
        <begin position="23"/>
        <end position="43"/>
    </location>
</feature>
<feature type="transmembrane region" description="Helical" evidence="1">
    <location>
        <begin position="63"/>
        <end position="83"/>
    </location>
</feature>
<feature type="transmembrane region" description="Helical" evidence="1">
    <location>
        <begin position="97"/>
        <end position="117"/>
    </location>
</feature>
<feature type="transmembrane region" description="Helical" evidence="1">
    <location>
        <begin position="120"/>
        <end position="140"/>
    </location>
</feature>
<feature type="transmembrane region" description="Helical" evidence="1">
    <location>
        <begin position="144"/>
        <end position="164"/>
    </location>
</feature>
<feature type="transmembrane region" description="Helical" evidence="1">
    <location>
        <begin position="202"/>
        <end position="222"/>
    </location>
</feature>
<feature type="transmembrane region" description="Helical" evidence="1">
    <location>
        <begin position="238"/>
        <end position="258"/>
    </location>
</feature>
<feature type="transmembrane region" description="Helical" evidence="1">
    <location>
        <begin position="303"/>
        <end position="323"/>
    </location>
</feature>
<feature type="transmembrane region" description="Helical" evidence="1">
    <location>
        <begin position="357"/>
        <end position="377"/>
    </location>
</feature>
<feature type="transmembrane region" description="Helical" evidence="1">
    <location>
        <begin position="391"/>
        <end position="411"/>
    </location>
</feature>
<feature type="transmembrane region" description="Helical" evidence="1">
    <location>
        <begin position="447"/>
        <end position="467"/>
    </location>
</feature>
<feature type="transmembrane region" description="Helical" evidence="1">
    <location>
        <begin position="475"/>
        <end position="495"/>
    </location>
</feature>
<sequence>MEISWGRAMWRNFLGQSPDWYKLALLVFLIVNPFIFLANPFVAGWLLVAEFIFTLAMALKCYPLLPGGLLAIEAVIIGMTSAAHVREEVAANLEVLLLLMFMVAGIYFMKQLLLFIFTRLLLSIRSKMVLSLAFCVAAAFLSAFLDALTVVAVVISVAVGFYGIYHRVASSRGEENDMLDDSHIDPHYKTVLEQFRGFLRSLMMHAGVGTALGGVMTMVGEPQNLIIAKAAGWHFGDFFLRMSPVTVPVLVCGLLTCMLVEKMRWFGYGETLPEKVRDVLQQFDDQSRKKRTRQDKIKLIVQAVIGVWLVTALALHLAEVGLIGLSVIILATALTGVTDEHAIGKAFTESLPFTALLTVFFSIVAVIIDQHLFAPIIQFVLQASEHAQLTLFYLFNGLLSSISDNVFVGTIYINEAKAAMENGAISLKQFELLAVAINTGTNLPSVATPNGQAAFLFLLTSALAPLIRLSYGRMVWMALPYTIVLTLIGLLCVEFALAPATEWMTQAGWLATLS</sequence>
<dbReference type="EMBL" id="CP000026">
    <property type="protein sequence ID" value="AAV77038.1"/>
    <property type="molecule type" value="Genomic_DNA"/>
</dbReference>
<dbReference type="RefSeq" id="WP_000406445.1">
    <property type="nucleotide sequence ID" value="NC_006511.1"/>
</dbReference>
<dbReference type="SMR" id="Q5PCR8"/>
<dbReference type="KEGG" id="spt:SPA1067"/>
<dbReference type="HOGENOM" id="CLU_041110_0_0_6"/>
<dbReference type="Proteomes" id="UP000008185">
    <property type="component" value="Chromosome"/>
</dbReference>
<dbReference type="GO" id="GO:0005886">
    <property type="term" value="C:plasma membrane"/>
    <property type="evidence" value="ECO:0007669"/>
    <property type="project" value="UniProtKB-SubCell"/>
</dbReference>
<dbReference type="GO" id="GO:0015385">
    <property type="term" value="F:sodium:proton antiporter activity"/>
    <property type="evidence" value="ECO:0007669"/>
    <property type="project" value="InterPro"/>
</dbReference>
<dbReference type="HAMAP" id="MF_01599">
    <property type="entry name" value="NhaB"/>
    <property type="match status" value="1"/>
</dbReference>
<dbReference type="InterPro" id="IPR004671">
    <property type="entry name" value="Na+/H+_antiporter_NhaB"/>
</dbReference>
<dbReference type="NCBIfam" id="TIGR00774">
    <property type="entry name" value="NhaB"/>
    <property type="match status" value="1"/>
</dbReference>
<dbReference type="NCBIfam" id="NF007093">
    <property type="entry name" value="PRK09547.1"/>
    <property type="match status" value="1"/>
</dbReference>
<dbReference type="PANTHER" id="PTHR43302:SF1">
    <property type="entry name" value="NA(+)_H(+) ANTIPORTER NHAB"/>
    <property type="match status" value="1"/>
</dbReference>
<dbReference type="PANTHER" id="PTHR43302">
    <property type="entry name" value="TRANSPORTER ARSB-RELATED"/>
    <property type="match status" value="1"/>
</dbReference>
<dbReference type="Pfam" id="PF06450">
    <property type="entry name" value="NhaB"/>
    <property type="match status" value="1"/>
</dbReference>
<organism>
    <name type="scientific">Salmonella paratyphi A (strain ATCC 9150 / SARB42)</name>
    <dbReference type="NCBI Taxonomy" id="295319"/>
    <lineage>
        <taxon>Bacteria</taxon>
        <taxon>Pseudomonadati</taxon>
        <taxon>Pseudomonadota</taxon>
        <taxon>Gammaproteobacteria</taxon>
        <taxon>Enterobacterales</taxon>
        <taxon>Enterobacteriaceae</taxon>
        <taxon>Salmonella</taxon>
    </lineage>
</organism>
<protein>
    <recommendedName>
        <fullName evidence="1">Na(+)/H(+) antiporter NhaB</fullName>
    </recommendedName>
    <alternativeName>
        <fullName evidence="1">Sodium/proton antiporter NhaB</fullName>
    </alternativeName>
</protein>
<keyword id="KW-0050">Antiport</keyword>
<keyword id="KW-0997">Cell inner membrane</keyword>
<keyword id="KW-1003">Cell membrane</keyword>
<keyword id="KW-0406">Ion transport</keyword>
<keyword id="KW-0472">Membrane</keyword>
<keyword id="KW-0915">Sodium</keyword>
<keyword id="KW-0739">Sodium transport</keyword>
<keyword id="KW-0812">Transmembrane</keyword>
<keyword id="KW-1133">Transmembrane helix</keyword>
<keyword id="KW-0813">Transport</keyword>
<gene>
    <name evidence="1" type="primary">nhaB</name>
    <name type="ordered locus">SPA1067</name>
</gene>
<evidence type="ECO:0000255" key="1">
    <source>
        <dbReference type="HAMAP-Rule" id="MF_01599"/>
    </source>
</evidence>
<accession>Q5PCR8</accession>
<reference key="1">
    <citation type="journal article" date="2004" name="Nat. Genet.">
        <title>Comparison of genome degradation in Paratyphi A and Typhi, human-restricted serovars of Salmonella enterica that cause typhoid.</title>
        <authorList>
            <person name="McClelland M."/>
            <person name="Sanderson K.E."/>
            <person name="Clifton S.W."/>
            <person name="Latreille P."/>
            <person name="Porwollik S."/>
            <person name="Sabo A."/>
            <person name="Meyer R."/>
            <person name="Bieri T."/>
            <person name="Ozersky P."/>
            <person name="McLellan M."/>
            <person name="Harkins C.R."/>
            <person name="Wang C."/>
            <person name="Nguyen C."/>
            <person name="Berghoff A."/>
            <person name="Elliott G."/>
            <person name="Kohlberg S."/>
            <person name="Strong C."/>
            <person name="Du F."/>
            <person name="Carter J."/>
            <person name="Kremizki C."/>
            <person name="Layman D."/>
            <person name="Leonard S."/>
            <person name="Sun H."/>
            <person name="Fulton L."/>
            <person name="Nash W."/>
            <person name="Miner T."/>
            <person name="Minx P."/>
            <person name="Delehaunty K."/>
            <person name="Fronick C."/>
            <person name="Magrini V."/>
            <person name="Nhan M."/>
            <person name="Warren W."/>
            <person name="Florea L."/>
            <person name="Spieth J."/>
            <person name="Wilson R.K."/>
        </authorList>
    </citation>
    <scope>NUCLEOTIDE SEQUENCE [LARGE SCALE GENOMIC DNA]</scope>
    <source>
        <strain>ATCC 9150 / SARB42</strain>
    </source>
</reference>
<proteinExistence type="inferred from homology"/>
<comment type="function">
    <text evidence="1">Na(+)/H(+) antiporter that extrudes sodium in exchange for external protons.</text>
</comment>
<comment type="catalytic activity">
    <reaction evidence="1">
        <text>2 Na(+)(in) + 3 H(+)(out) = 2 Na(+)(out) + 3 H(+)(in)</text>
        <dbReference type="Rhea" id="RHEA:29247"/>
        <dbReference type="ChEBI" id="CHEBI:15378"/>
        <dbReference type="ChEBI" id="CHEBI:29101"/>
    </reaction>
    <physiologicalReaction direction="left-to-right" evidence="1">
        <dbReference type="Rhea" id="RHEA:29248"/>
    </physiologicalReaction>
</comment>
<comment type="subcellular location">
    <subcellularLocation>
        <location evidence="1">Cell inner membrane</location>
        <topology evidence="1">Multi-pass membrane protein</topology>
    </subcellularLocation>
</comment>
<comment type="similarity">
    <text evidence="1">Belongs to the NhaB Na(+)/H(+) (TC 2.A.34) antiporter family.</text>
</comment>
<name>NHAB_SALPA</name>